<organism>
    <name type="scientific">Clostridium acetobutylicum (strain ATCC 824 / DSM 792 / JCM 1419 / IAM 19013 / LMG 5710 / NBRC 13948 / NRRL B-527 / VKM B-1787 / 2291 / W)</name>
    <dbReference type="NCBI Taxonomy" id="272562"/>
    <lineage>
        <taxon>Bacteria</taxon>
        <taxon>Bacillati</taxon>
        <taxon>Bacillota</taxon>
        <taxon>Clostridia</taxon>
        <taxon>Eubacteriales</taxon>
        <taxon>Clostridiaceae</taxon>
        <taxon>Clostridium</taxon>
    </lineage>
</organism>
<feature type="chain" id="PRO_0000130377" description="Large ribosomal subunit protein uL29">
    <location>
        <begin position="1"/>
        <end position="67"/>
    </location>
</feature>
<protein>
    <recommendedName>
        <fullName evidence="1">Large ribosomal subunit protein uL29</fullName>
    </recommendedName>
    <alternativeName>
        <fullName evidence="2">50S ribosomal protein L29</fullName>
    </alternativeName>
</protein>
<keyword id="KW-1185">Reference proteome</keyword>
<keyword id="KW-0687">Ribonucleoprotein</keyword>
<keyword id="KW-0689">Ribosomal protein</keyword>
<comment type="similarity">
    <text evidence="1">Belongs to the universal ribosomal protein uL29 family.</text>
</comment>
<proteinExistence type="inferred from homology"/>
<dbReference type="EMBL" id="AE001437">
    <property type="protein sequence ID" value="AAK81064.1"/>
    <property type="molecule type" value="Genomic_DNA"/>
</dbReference>
<dbReference type="PIR" id="E97284">
    <property type="entry name" value="E97284"/>
</dbReference>
<dbReference type="RefSeq" id="NP_349724.1">
    <property type="nucleotide sequence ID" value="NC_003030.1"/>
</dbReference>
<dbReference type="RefSeq" id="WP_010966404.1">
    <property type="nucleotide sequence ID" value="NC_003030.1"/>
</dbReference>
<dbReference type="SMR" id="Q97EI6"/>
<dbReference type="STRING" id="272562.CA_C3125"/>
<dbReference type="GeneID" id="44999612"/>
<dbReference type="KEGG" id="cac:CA_C3125"/>
<dbReference type="PATRIC" id="fig|272562.8.peg.3308"/>
<dbReference type="eggNOG" id="COG0255">
    <property type="taxonomic scope" value="Bacteria"/>
</dbReference>
<dbReference type="HOGENOM" id="CLU_158491_5_2_9"/>
<dbReference type="OrthoDB" id="9815192at2"/>
<dbReference type="Proteomes" id="UP000000814">
    <property type="component" value="Chromosome"/>
</dbReference>
<dbReference type="GO" id="GO:0022625">
    <property type="term" value="C:cytosolic large ribosomal subunit"/>
    <property type="evidence" value="ECO:0007669"/>
    <property type="project" value="TreeGrafter"/>
</dbReference>
<dbReference type="GO" id="GO:0003735">
    <property type="term" value="F:structural constituent of ribosome"/>
    <property type="evidence" value="ECO:0007669"/>
    <property type="project" value="InterPro"/>
</dbReference>
<dbReference type="GO" id="GO:0006412">
    <property type="term" value="P:translation"/>
    <property type="evidence" value="ECO:0007669"/>
    <property type="project" value="UniProtKB-UniRule"/>
</dbReference>
<dbReference type="CDD" id="cd00427">
    <property type="entry name" value="Ribosomal_L29_HIP"/>
    <property type="match status" value="1"/>
</dbReference>
<dbReference type="FunFam" id="1.10.287.310:FF:000001">
    <property type="entry name" value="50S ribosomal protein L29"/>
    <property type="match status" value="1"/>
</dbReference>
<dbReference type="Gene3D" id="1.10.287.310">
    <property type="match status" value="1"/>
</dbReference>
<dbReference type="HAMAP" id="MF_00374">
    <property type="entry name" value="Ribosomal_uL29"/>
    <property type="match status" value="1"/>
</dbReference>
<dbReference type="InterPro" id="IPR050063">
    <property type="entry name" value="Ribosomal_protein_uL29"/>
</dbReference>
<dbReference type="InterPro" id="IPR001854">
    <property type="entry name" value="Ribosomal_uL29"/>
</dbReference>
<dbReference type="InterPro" id="IPR018254">
    <property type="entry name" value="Ribosomal_uL29_CS"/>
</dbReference>
<dbReference type="InterPro" id="IPR036049">
    <property type="entry name" value="Ribosomal_uL29_sf"/>
</dbReference>
<dbReference type="NCBIfam" id="TIGR00012">
    <property type="entry name" value="L29"/>
    <property type="match status" value="1"/>
</dbReference>
<dbReference type="PANTHER" id="PTHR10916">
    <property type="entry name" value="60S RIBOSOMAL PROTEIN L35/50S RIBOSOMAL PROTEIN L29"/>
    <property type="match status" value="1"/>
</dbReference>
<dbReference type="PANTHER" id="PTHR10916:SF0">
    <property type="entry name" value="LARGE RIBOSOMAL SUBUNIT PROTEIN UL29C"/>
    <property type="match status" value="1"/>
</dbReference>
<dbReference type="Pfam" id="PF00831">
    <property type="entry name" value="Ribosomal_L29"/>
    <property type="match status" value="1"/>
</dbReference>
<dbReference type="SUPFAM" id="SSF46561">
    <property type="entry name" value="Ribosomal protein L29 (L29p)"/>
    <property type="match status" value="1"/>
</dbReference>
<dbReference type="PROSITE" id="PS00579">
    <property type="entry name" value="RIBOSOMAL_L29"/>
    <property type="match status" value="1"/>
</dbReference>
<name>RL29_CLOAB</name>
<accession>Q97EI6</accession>
<reference key="1">
    <citation type="journal article" date="2001" name="J. Bacteriol.">
        <title>Genome sequence and comparative analysis of the solvent-producing bacterium Clostridium acetobutylicum.</title>
        <authorList>
            <person name="Noelling J."/>
            <person name="Breton G."/>
            <person name="Omelchenko M.V."/>
            <person name="Makarova K.S."/>
            <person name="Zeng Q."/>
            <person name="Gibson R."/>
            <person name="Lee H.M."/>
            <person name="Dubois J."/>
            <person name="Qiu D."/>
            <person name="Hitti J."/>
            <person name="Wolf Y.I."/>
            <person name="Tatusov R.L."/>
            <person name="Sabathe F."/>
            <person name="Doucette-Stamm L.A."/>
            <person name="Soucaille P."/>
            <person name="Daly M.J."/>
            <person name="Bennett G.N."/>
            <person name="Koonin E.V."/>
            <person name="Smith D.R."/>
        </authorList>
    </citation>
    <scope>NUCLEOTIDE SEQUENCE [LARGE SCALE GENOMIC DNA]</scope>
    <source>
        <strain>ATCC 824 / DSM 792 / JCM 1419 / IAM 19013 / LMG 5710 / NBRC 13948 / NRRL B-527 / VKM B-1787 / 2291 / W</strain>
    </source>
</reference>
<sequence length="67" mass="7856">MKAKELREKAPEELNLQLNDLKTELFTLRFQLATGQLENPMRIKEVKKSIAQIKTILREEELKACED</sequence>
<gene>
    <name evidence="1" type="primary">rpmC</name>
    <name type="ordered locus">CA_C3125</name>
</gene>
<evidence type="ECO:0000255" key="1">
    <source>
        <dbReference type="HAMAP-Rule" id="MF_00374"/>
    </source>
</evidence>
<evidence type="ECO:0000305" key="2"/>